<feature type="chain" id="PRO_0000306747" description="Small ribosomal subunit protein uS13">
    <location>
        <begin position="1"/>
        <end position="118"/>
    </location>
</feature>
<feature type="region of interest" description="Disordered" evidence="2">
    <location>
        <begin position="92"/>
        <end position="118"/>
    </location>
</feature>
<gene>
    <name evidence="1" type="primary">rpsM</name>
    <name type="ordered locus">YPN_3838</name>
    <name type="ORF">YP516_4360</name>
</gene>
<name>RS13_YERPN</name>
<accession>Q1CCW5</accession>
<accession>D1Q2J9</accession>
<sequence>MARIAGINIPDQKHTVIALTAIFGIGKTRSQAICVAAGIAEHVKISELSEEQIEKLRDEVAKYVVEGDLRREVTLSIKRLMDLGTYRGLRHRRGLPVRGQRTKTNARTRKGPRKPIKK</sequence>
<organism>
    <name type="scientific">Yersinia pestis bv. Antiqua (strain Nepal516)</name>
    <dbReference type="NCBI Taxonomy" id="377628"/>
    <lineage>
        <taxon>Bacteria</taxon>
        <taxon>Pseudomonadati</taxon>
        <taxon>Pseudomonadota</taxon>
        <taxon>Gammaproteobacteria</taxon>
        <taxon>Enterobacterales</taxon>
        <taxon>Yersiniaceae</taxon>
        <taxon>Yersinia</taxon>
    </lineage>
</organism>
<comment type="function">
    <text evidence="1">Located at the top of the head of the 30S subunit, it contacts several helices of the 16S rRNA. In the 70S ribosome it contacts the 23S rRNA (bridge B1a) and protein L5 of the 50S subunit (bridge B1b), connecting the 2 subunits; these bridges are implicated in subunit movement. Contacts the tRNAs in the A and P-sites.</text>
</comment>
<comment type="subunit">
    <text evidence="1">Part of the 30S ribosomal subunit. Forms a loose heterodimer with protein S19. Forms two bridges to the 50S subunit in the 70S ribosome.</text>
</comment>
<comment type="similarity">
    <text evidence="1">Belongs to the universal ribosomal protein uS13 family.</text>
</comment>
<reference key="1">
    <citation type="journal article" date="2006" name="J. Bacteriol.">
        <title>Complete genome sequence of Yersinia pestis strains Antiqua and Nepal516: evidence of gene reduction in an emerging pathogen.</title>
        <authorList>
            <person name="Chain P.S.G."/>
            <person name="Hu P."/>
            <person name="Malfatti S.A."/>
            <person name="Radnedge L."/>
            <person name="Larimer F."/>
            <person name="Vergez L.M."/>
            <person name="Worsham P."/>
            <person name="Chu M.C."/>
            <person name="Andersen G.L."/>
        </authorList>
    </citation>
    <scope>NUCLEOTIDE SEQUENCE [LARGE SCALE GENOMIC DNA]</scope>
    <source>
        <strain>Nepal516</strain>
    </source>
</reference>
<reference key="2">
    <citation type="submission" date="2009-04" db="EMBL/GenBank/DDBJ databases">
        <title>Yersinia pestis Nepal516A whole genome shotgun sequencing project.</title>
        <authorList>
            <person name="Plunkett G. III"/>
            <person name="Anderson B.D."/>
            <person name="Baumler D.J."/>
            <person name="Burland V."/>
            <person name="Cabot E.L."/>
            <person name="Glasner J.D."/>
            <person name="Mau B."/>
            <person name="Neeno-Eckwall E."/>
            <person name="Perna N.T."/>
            <person name="Munk A.C."/>
            <person name="Tapia R."/>
            <person name="Green L.D."/>
            <person name="Rogers Y.C."/>
            <person name="Detter J.C."/>
            <person name="Bruce D.C."/>
            <person name="Brettin T.S."/>
        </authorList>
    </citation>
    <scope>NUCLEOTIDE SEQUENCE [LARGE SCALE GENOMIC DNA]</scope>
    <source>
        <strain>Nepal516</strain>
    </source>
</reference>
<dbReference type="EMBL" id="CP000305">
    <property type="protein sequence ID" value="ABG20165.1"/>
    <property type="molecule type" value="Genomic_DNA"/>
</dbReference>
<dbReference type="EMBL" id="ACNQ01000019">
    <property type="protein sequence ID" value="EEO74752.1"/>
    <property type="molecule type" value="Genomic_DNA"/>
</dbReference>
<dbReference type="RefSeq" id="WP_002213346.1">
    <property type="nucleotide sequence ID" value="NZ_ACNQ01000019.1"/>
</dbReference>
<dbReference type="SMR" id="Q1CCW5"/>
<dbReference type="GeneID" id="96663174"/>
<dbReference type="KEGG" id="ypn:YPN_3838"/>
<dbReference type="HOGENOM" id="CLU_103849_1_2_6"/>
<dbReference type="Proteomes" id="UP000008936">
    <property type="component" value="Chromosome"/>
</dbReference>
<dbReference type="GO" id="GO:0005829">
    <property type="term" value="C:cytosol"/>
    <property type="evidence" value="ECO:0007669"/>
    <property type="project" value="TreeGrafter"/>
</dbReference>
<dbReference type="GO" id="GO:0015935">
    <property type="term" value="C:small ribosomal subunit"/>
    <property type="evidence" value="ECO:0007669"/>
    <property type="project" value="TreeGrafter"/>
</dbReference>
<dbReference type="GO" id="GO:0019843">
    <property type="term" value="F:rRNA binding"/>
    <property type="evidence" value="ECO:0007669"/>
    <property type="project" value="UniProtKB-UniRule"/>
</dbReference>
<dbReference type="GO" id="GO:0003735">
    <property type="term" value="F:structural constituent of ribosome"/>
    <property type="evidence" value="ECO:0007669"/>
    <property type="project" value="InterPro"/>
</dbReference>
<dbReference type="GO" id="GO:0000049">
    <property type="term" value="F:tRNA binding"/>
    <property type="evidence" value="ECO:0007669"/>
    <property type="project" value="UniProtKB-UniRule"/>
</dbReference>
<dbReference type="GO" id="GO:0006412">
    <property type="term" value="P:translation"/>
    <property type="evidence" value="ECO:0007669"/>
    <property type="project" value="UniProtKB-UniRule"/>
</dbReference>
<dbReference type="FunFam" id="1.10.8.50:FF:000001">
    <property type="entry name" value="30S ribosomal protein S13"/>
    <property type="match status" value="1"/>
</dbReference>
<dbReference type="FunFam" id="4.10.910.10:FF:000001">
    <property type="entry name" value="30S ribosomal protein S13"/>
    <property type="match status" value="1"/>
</dbReference>
<dbReference type="Gene3D" id="1.10.8.50">
    <property type="match status" value="1"/>
</dbReference>
<dbReference type="Gene3D" id="4.10.910.10">
    <property type="entry name" value="30s ribosomal protein s13, domain 2"/>
    <property type="match status" value="1"/>
</dbReference>
<dbReference type="HAMAP" id="MF_01315">
    <property type="entry name" value="Ribosomal_uS13"/>
    <property type="match status" value="1"/>
</dbReference>
<dbReference type="InterPro" id="IPR027437">
    <property type="entry name" value="Rbsml_uS13_C"/>
</dbReference>
<dbReference type="InterPro" id="IPR001892">
    <property type="entry name" value="Ribosomal_uS13"/>
</dbReference>
<dbReference type="InterPro" id="IPR010979">
    <property type="entry name" value="Ribosomal_uS13-like_H2TH"/>
</dbReference>
<dbReference type="InterPro" id="IPR019980">
    <property type="entry name" value="Ribosomal_uS13_bac-type"/>
</dbReference>
<dbReference type="InterPro" id="IPR018269">
    <property type="entry name" value="Ribosomal_uS13_CS"/>
</dbReference>
<dbReference type="NCBIfam" id="TIGR03631">
    <property type="entry name" value="uS13_bact"/>
    <property type="match status" value="1"/>
</dbReference>
<dbReference type="PANTHER" id="PTHR10871">
    <property type="entry name" value="30S RIBOSOMAL PROTEIN S13/40S RIBOSOMAL PROTEIN S18"/>
    <property type="match status" value="1"/>
</dbReference>
<dbReference type="PANTHER" id="PTHR10871:SF1">
    <property type="entry name" value="SMALL RIBOSOMAL SUBUNIT PROTEIN US13M"/>
    <property type="match status" value="1"/>
</dbReference>
<dbReference type="Pfam" id="PF00416">
    <property type="entry name" value="Ribosomal_S13"/>
    <property type="match status" value="1"/>
</dbReference>
<dbReference type="PIRSF" id="PIRSF002134">
    <property type="entry name" value="Ribosomal_S13"/>
    <property type="match status" value="1"/>
</dbReference>
<dbReference type="SUPFAM" id="SSF46946">
    <property type="entry name" value="S13-like H2TH domain"/>
    <property type="match status" value="1"/>
</dbReference>
<dbReference type="PROSITE" id="PS00646">
    <property type="entry name" value="RIBOSOMAL_S13_1"/>
    <property type="match status" value="1"/>
</dbReference>
<dbReference type="PROSITE" id="PS50159">
    <property type="entry name" value="RIBOSOMAL_S13_2"/>
    <property type="match status" value="1"/>
</dbReference>
<proteinExistence type="inferred from homology"/>
<keyword id="KW-0687">Ribonucleoprotein</keyword>
<keyword id="KW-0689">Ribosomal protein</keyword>
<keyword id="KW-0694">RNA-binding</keyword>
<keyword id="KW-0699">rRNA-binding</keyword>
<keyword id="KW-0820">tRNA-binding</keyword>
<protein>
    <recommendedName>
        <fullName evidence="1">Small ribosomal subunit protein uS13</fullName>
    </recommendedName>
    <alternativeName>
        <fullName evidence="3">30S ribosomal protein S13</fullName>
    </alternativeName>
</protein>
<evidence type="ECO:0000255" key="1">
    <source>
        <dbReference type="HAMAP-Rule" id="MF_01315"/>
    </source>
</evidence>
<evidence type="ECO:0000256" key="2">
    <source>
        <dbReference type="SAM" id="MobiDB-lite"/>
    </source>
</evidence>
<evidence type="ECO:0000305" key="3"/>